<protein>
    <recommendedName>
        <fullName evidence="1">Ribose-5-phosphate isomerase A</fullName>
        <ecNumber evidence="1">5.3.1.6</ecNumber>
    </recommendedName>
    <alternativeName>
        <fullName evidence="1">Phosphoriboisomerase A</fullName>
        <shortName evidence="1">PRI</shortName>
    </alternativeName>
</protein>
<name>RPIA_ARCFU</name>
<reference key="1">
    <citation type="journal article" date="1997" name="Nature">
        <title>The complete genome sequence of the hyperthermophilic, sulphate-reducing archaeon Archaeoglobus fulgidus.</title>
        <authorList>
            <person name="Klenk H.-P."/>
            <person name="Clayton R.A."/>
            <person name="Tomb J.-F."/>
            <person name="White O."/>
            <person name="Nelson K.E."/>
            <person name="Ketchum K.A."/>
            <person name="Dodson R.J."/>
            <person name="Gwinn M.L."/>
            <person name="Hickey E.K."/>
            <person name="Peterson J.D."/>
            <person name="Richardson D.L."/>
            <person name="Kerlavage A.R."/>
            <person name="Graham D.E."/>
            <person name="Kyrpides N.C."/>
            <person name="Fleischmann R.D."/>
            <person name="Quackenbush J."/>
            <person name="Lee N.H."/>
            <person name="Sutton G.G."/>
            <person name="Gill S.R."/>
            <person name="Kirkness E.F."/>
            <person name="Dougherty B.A."/>
            <person name="McKenney K."/>
            <person name="Adams M.D."/>
            <person name="Loftus B.J."/>
            <person name="Peterson S.N."/>
            <person name="Reich C.I."/>
            <person name="McNeil L.K."/>
            <person name="Badger J.H."/>
            <person name="Glodek A."/>
            <person name="Zhou L."/>
            <person name="Overbeek R."/>
            <person name="Gocayne J.D."/>
            <person name="Weidman J.F."/>
            <person name="McDonald L.A."/>
            <person name="Utterback T.R."/>
            <person name="Cotton M.D."/>
            <person name="Spriggs T."/>
            <person name="Artiach P."/>
            <person name="Kaine B.P."/>
            <person name="Sykes S.M."/>
            <person name="Sadow P.W."/>
            <person name="D'Andrea K.P."/>
            <person name="Bowman C."/>
            <person name="Fujii C."/>
            <person name="Garland S.A."/>
            <person name="Mason T.M."/>
            <person name="Olsen G.J."/>
            <person name="Fraser C.M."/>
            <person name="Smith H.O."/>
            <person name="Woese C.R."/>
            <person name="Venter J.C."/>
        </authorList>
    </citation>
    <scope>NUCLEOTIDE SEQUENCE [LARGE SCALE GENOMIC DNA]</scope>
    <source>
        <strain>ATCC 49558 / DSM 4304 / JCM 9628 / NBRC 100126 / VC-16</strain>
    </source>
</reference>
<comment type="function">
    <text evidence="1">Catalyzes the reversible conversion of ribose-5-phosphate to ribulose 5-phosphate.</text>
</comment>
<comment type="catalytic activity">
    <reaction evidence="1">
        <text>aldehydo-D-ribose 5-phosphate = D-ribulose 5-phosphate</text>
        <dbReference type="Rhea" id="RHEA:14657"/>
        <dbReference type="ChEBI" id="CHEBI:58121"/>
        <dbReference type="ChEBI" id="CHEBI:58273"/>
        <dbReference type="EC" id="5.3.1.6"/>
    </reaction>
</comment>
<comment type="pathway">
    <text evidence="1">Carbohydrate degradation; pentose phosphate pathway; D-ribose 5-phosphate from D-ribulose 5-phosphate (non-oxidative stage): step 1/1.</text>
</comment>
<comment type="subunit">
    <text evidence="1">Homodimer.</text>
</comment>
<comment type="similarity">
    <text evidence="1">Belongs to the ribose 5-phosphate isomerase family.</text>
</comment>
<proteinExistence type="inferred from homology"/>
<dbReference type="EC" id="5.3.1.6" evidence="1"/>
<dbReference type="EMBL" id="AE000782">
    <property type="protein sequence ID" value="AAB90297.1"/>
    <property type="molecule type" value="Genomic_DNA"/>
</dbReference>
<dbReference type="PIR" id="G69367">
    <property type="entry name" value="G69367"/>
</dbReference>
<dbReference type="RefSeq" id="WP_010878443.1">
    <property type="nucleotide sequence ID" value="NC_000917.1"/>
</dbReference>
<dbReference type="SMR" id="O29319"/>
<dbReference type="STRING" id="224325.AF_0943"/>
<dbReference type="PaxDb" id="224325-AF_0943"/>
<dbReference type="EnsemblBacteria" id="AAB90297">
    <property type="protein sequence ID" value="AAB90297"/>
    <property type="gene ID" value="AF_0943"/>
</dbReference>
<dbReference type="GeneID" id="1484166"/>
<dbReference type="KEGG" id="afu:AF_0943"/>
<dbReference type="eggNOG" id="arCOG01122">
    <property type="taxonomic scope" value="Archaea"/>
</dbReference>
<dbReference type="HOGENOM" id="CLU_056590_1_1_2"/>
<dbReference type="OrthoDB" id="19013at2157"/>
<dbReference type="PhylomeDB" id="O29319"/>
<dbReference type="UniPathway" id="UPA00115">
    <property type="reaction ID" value="UER00412"/>
</dbReference>
<dbReference type="Proteomes" id="UP000002199">
    <property type="component" value="Chromosome"/>
</dbReference>
<dbReference type="GO" id="GO:0005829">
    <property type="term" value="C:cytosol"/>
    <property type="evidence" value="ECO:0007669"/>
    <property type="project" value="TreeGrafter"/>
</dbReference>
<dbReference type="GO" id="GO:0004751">
    <property type="term" value="F:ribose-5-phosphate isomerase activity"/>
    <property type="evidence" value="ECO:0007669"/>
    <property type="project" value="UniProtKB-UniRule"/>
</dbReference>
<dbReference type="GO" id="GO:0006014">
    <property type="term" value="P:D-ribose metabolic process"/>
    <property type="evidence" value="ECO:0007669"/>
    <property type="project" value="TreeGrafter"/>
</dbReference>
<dbReference type="GO" id="GO:0009052">
    <property type="term" value="P:pentose-phosphate shunt, non-oxidative branch"/>
    <property type="evidence" value="ECO:0007669"/>
    <property type="project" value="UniProtKB-UniRule"/>
</dbReference>
<dbReference type="CDD" id="cd01398">
    <property type="entry name" value="RPI_A"/>
    <property type="match status" value="1"/>
</dbReference>
<dbReference type="FunFam" id="3.30.70.260:FF:000018">
    <property type="entry name" value="Ribose-5-phosphate isomerase A"/>
    <property type="match status" value="1"/>
</dbReference>
<dbReference type="FunFam" id="3.40.50.1360:FF:000001">
    <property type="entry name" value="Ribose-5-phosphate isomerase A"/>
    <property type="match status" value="1"/>
</dbReference>
<dbReference type="Gene3D" id="3.30.70.260">
    <property type="match status" value="1"/>
</dbReference>
<dbReference type="Gene3D" id="3.40.50.1360">
    <property type="match status" value="1"/>
</dbReference>
<dbReference type="HAMAP" id="MF_00170">
    <property type="entry name" value="Rib_5P_isom_A"/>
    <property type="match status" value="1"/>
</dbReference>
<dbReference type="InterPro" id="IPR037171">
    <property type="entry name" value="NagB/RpiA_transferase-like"/>
</dbReference>
<dbReference type="InterPro" id="IPR020672">
    <property type="entry name" value="Ribose5P_isomerase_typA_subgr"/>
</dbReference>
<dbReference type="InterPro" id="IPR004788">
    <property type="entry name" value="Ribose5P_isomerase_type_A"/>
</dbReference>
<dbReference type="NCBIfam" id="NF001924">
    <property type="entry name" value="PRK00702.1"/>
    <property type="match status" value="1"/>
</dbReference>
<dbReference type="NCBIfam" id="TIGR00021">
    <property type="entry name" value="rpiA"/>
    <property type="match status" value="1"/>
</dbReference>
<dbReference type="PANTHER" id="PTHR11934">
    <property type="entry name" value="RIBOSE-5-PHOSPHATE ISOMERASE"/>
    <property type="match status" value="1"/>
</dbReference>
<dbReference type="PANTHER" id="PTHR11934:SF0">
    <property type="entry name" value="RIBOSE-5-PHOSPHATE ISOMERASE"/>
    <property type="match status" value="1"/>
</dbReference>
<dbReference type="Pfam" id="PF06026">
    <property type="entry name" value="Rib_5-P_isom_A"/>
    <property type="match status" value="1"/>
</dbReference>
<dbReference type="SUPFAM" id="SSF75445">
    <property type="entry name" value="D-ribose-5-phosphate isomerase (RpiA), lid domain"/>
    <property type="match status" value="1"/>
</dbReference>
<dbReference type="SUPFAM" id="SSF100950">
    <property type="entry name" value="NagB/RpiA/CoA transferase-like"/>
    <property type="match status" value="1"/>
</dbReference>
<organism>
    <name type="scientific">Archaeoglobus fulgidus (strain ATCC 49558 / DSM 4304 / JCM 9628 / NBRC 100126 / VC-16)</name>
    <dbReference type="NCBI Taxonomy" id="224325"/>
    <lineage>
        <taxon>Archaea</taxon>
        <taxon>Methanobacteriati</taxon>
        <taxon>Methanobacteriota</taxon>
        <taxon>Archaeoglobi</taxon>
        <taxon>Archaeoglobales</taxon>
        <taxon>Archaeoglobaceae</taxon>
        <taxon>Archaeoglobus</taxon>
    </lineage>
</organism>
<feature type="chain" id="PRO_0000158506" description="Ribose-5-phosphate isomerase A">
    <location>
        <begin position="1"/>
        <end position="225"/>
    </location>
</feature>
<feature type="active site" description="Proton acceptor" evidence="1">
    <location>
        <position position="104"/>
    </location>
</feature>
<feature type="binding site" evidence="1">
    <location>
        <begin position="27"/>
        <end position="30"/>
    </location>
    <ligand>
        <name>substrate</name>
    </ligand>
</feature>
<feature type="binding site" evidence="1">
    <location>
        <begin position="82"/>
        <end position="85"/>
    </location>
    <ligand>
        <name>substrate</name>
    </ligand>
</feature>
<feature type="binding site" evidence="1">
    <location>
        <begin position="95"/>
        <end position="98"/>
    </location>
    <ligand>
        <name>substrate</name>
    </ligand>
</feature>
<feature type="binding site" evidence="1">
    <location>
        <position position="122"/>
    </location>
    <ligand>
        <name>substrate</name>
    </ligand>
</feature>
<gene>
    <name evidence="1" type="primary">rpiA</name>
    <name type="ordered locus">AF_0943</name>
</gene>
<sequence>MDSSGKYNAAKLALELVKDGMVLGIGSGSTVEVFLNLLGDKIREEGLEIYGIPSSYQSYFAAIRNGVEIVDLVEFEPDLCIDGADQVDAKLNCIKGGGGAMTREKIVAKASRKVVIIVDESKLVEKLSMPVPVEVLPFAYGWVLREIEKMGCKARLREGKGKIGPVITDNGNFVVDCDFGVIEEDRVEGLEGEIKLISGVVENGIFSKELIDAVIAGSSRSARFL</sequence>
<evidence type="ECO:0000255" key="1">
    <source>
        <dbReference type="HAMAP-Rule" id="MF_00170"/>
    </source>
</evidence>
<accession>O29319</accession>
<keyword id="KW-0413">Isomerase</keyword>
<keyword id="KW-1185">Reference proteome</keyword>